<organism>
    <name type="scientific">Pseudomonas putida (strain GB-1)</name>
    <dbReference type="NCBI Taxonomy" id="76869"/>
    <lineage>
        <taxon>Bacteria</taxon>
        <taxon>Pseudomonadati</taxon>
        <taxon>Pseudomonadota</taxon>
        <taxon>Gammaproteobacteria</taxon>
        <taxon>Pseudomonadales</taxon>
        <taxon>Pseudomonadaceae</taxon>
        <taxon>Pseudomonas</taxon>
    </lineage>
</organism>
<accession>B0KTK9</accession>
<proteinExistence type="inferred from homology"/>
<dbReference type="EMBL" id="CP000926">
    <property type="protein sequence ID" value="ABZ00107.1"/>
    <property type="molecule type" value="Genomic_DNA"/>
</dbReference>
<dbReference type="RefSeq" id="WP_012273783.1">
    <property type="nucleotide sequence ID" value="NC_010322.1"/>
</dbReference>
<dbReference type="KEGG" id="ppg:PputGB1_4218"/>
<dbReference type="eggNOG" id="COG3158">
    <property type="taxonomic scope" value="Bacteria"/>
</dbReference>
<dbReference type="HOGENOM" id="CLU_008142_4_2_6"/>
<dbReference type="Proteomes" id="UP000002157">
    <property type="component" value="Chromosome"/>
</dbReference>
<dbReference type="GO" id="GO:0005886">
    <property type="term" value="C:plasma membrane"/>
    <property type="evidence" value="ECO:0007669"/>
    <property type="project" value="UniProtKB-SubCell"/>
</dbReference>
<dbReference type="GO" id="GO:0015079">
    <property type="term" value="F:potassium ion transmembrane transporter activity"/>
    <property type="evidence" value="ECO:0007669"/>
    <property type="project" value="UniProtKB-UniRule"/>
</dbReference>
<dbReference type="GO" id="GO:0015293">
    <property type="term" value="F:symporter activity"/>
    <property type="evidence" value="ECO:0007669"/>
    <property type="project" value="UniProtKB-UniRule"/>
</dbReference>
<dbReference type="HAMAP" id="MF_01522">
    <property type="entry name" value="Kup"/>
    <property type="match status" value="1"/>
</dbReference>
<dbReference type="InterPro" id="IPR003855">
    <property type="entry name" value="K+_transporter"/>
</dbReference>
<dbReference type="InterPro" id="IPR053952">
    <property type="entry name" value="K_trans_C"/>
</dbReference>
<dbReference type="InterPro" id="IPR053951">
    <property type="entry name" value="K_trans_N"/>
</dbReference>
<dbReference type="InterPro" id="IPR023051">
    <property type="entry name" value="Kup"/>
</dbReference>
<dbReference type="PANTHER" id="PTHR30540:SF79">
    <property type="entry name" value="LOW AFFINITY POTASSIUM TRANSPORT SYSTEM PROTEIN KUP"/>
    <property type="match status" value="1"/>
</dbReference>
<dbReference type="PANTHER" id="PTHR30540">
    <property type="entry name" value="OSMOTIC STRESS POTASSIUM TRANSPORTER"/>
    <property type="match status" value="1"/>
</dbReference>
<dbReference type="Pfam" id="PF02705">
    <property type="entry name" value="K_trans"/>
    <property type="match status" value="1"/>
</dbReference>
<dbReference type="Pfam" id="PF22776">
    <property type="entry name" value="K_trans_C"/>
    <property type="match status" value="1"/>
</dbReference>
<protein>
    <recommendedName>
        <fullName evidence="1">Probable potassium transport system protein Kup</fullName>
    </recommendedName>
</protein>
<sequence length="636" mass="68698">MVQASSHAEGGHEGKQGAARSLGLLVAAVGVVYGDIGTSPLYTLKEVFTGGYGVPVNHDGVLGILSLILWSLLWVVSFKYVMFILRADNQGEGGTMALTALARRATAAYPRLRTLMVICGLIGASLFYGDSMITPAVSVLSAVEGMGLAFDGIDHWVVPISLVVLVALFLVQKHGTETIGKLFGPIMVTWFVVLGALGVHGISQSPEVLKAFNPGWAVNFFVVHPGMGVAILGAVVLALTGAEALYADMGHFGRKPIARAWFILVLPALVLNYFGQGALLLQNPEAARNPFYLLAPSWALLPLVGLATMATVIASQAVISGAFSLTRQAIQLGYIPRMQIQHTSSDEQGQIYIGAVNWTLMVGVVLLVIGFESSGALAAAYGVAVTGTMLMTTILVSAVMLLLWKWPPVLAVPLLMGFLFVDGLFFAANVPKIVQGGAFPVLAGGVLFLLMSTWKRGKQILVERIDEGALPLPLFISSIRIQPPHRVEGTAVFLTARSDAVPHALLHNMLHNQVLHSQVVLLTVVSEDQPRVPEHERFEVEAYGDGFFRVLLHFGFMDEPDVPAALKLCHLDDLDFTPMRTTYFLSRETVIASRLEGMSRWRGNLFAFLLKNANGNLRFFNLPLNRVIELGTQVEI</sequence>
<comment type="function">
    <text evidence="1">Transport of potassium into the cell. Likely operates as a K(+):H(+) symporter.</text>
</comment>
<comment type="catalytic activity">
    <reaction evidence="1">
        <text>K(+)(in) + H(+)(in) = K(+)(out) + H(+)(out)</text>
        <dbReference type="Rhea" id="RHEA:28490"/>
        <dbReference type="ChEBI" id="CHEBI:15378"/>
        <dbReference type="ChEBI" id="CHEBI:29103"/>
    </reaction>
    <physiologicalReaction direction="right-to-left" evidence="1">
        <dbReference type="Rhea" id="RHEA:28492"/>
    </physiologicalReaction>
</comment>
<comment type="subcellular location">
    <subcellularLocation>
        <location evidence="1">Cell inner membrane</location>
        <topology evidence="1">Multi-pass membrane protein</topology>
    </subcellularLocation>
</comment>
<comment type="similarity">
    <text evidence="1">Belongs to the HAK/KUP transporter (TC 2.A.72) family.</text>
</comment>
<keyword id="KW-0997">Cell inner membrane</keyword>
<keyword id="KW-1003">Cell membrane</keyword>
<keyword id="KW-0406">Ion transport</keyword>
<keyword id="KW-0472">Membrane</keyword>
<keyword id="KW-0630">Potassium</keyword>
<keyword id="KW-0633">Potassium transport</keyword>
<keyword id="KW-0769">Symport</keyword>
<keyword id="KW-0812">Transmembrane</keyword>
<keyword id="KW-1133">Transmembrane helix</keyword>
<keyword id="KW-0813">Transport</keyword>
<feature type="chain" id="PRO_1000087559" description="Probable potassium transport system protein Kup">
    <location>
        <begin position="1"/>
        <end position="636"/>
    </location>
</feature>
<feature type="transmembrane region" description="Helical" evidence="1">
    <location>
        <begin position="22"/>
        <end position="42"/>
    </location>
</feature>
<feature type="transmembrane region" description="Helical" evidence="1">
    <location>
        <begin position="64"/>
        <end position="84"/>
    </location>
</feature>
<feature type="transmembrane region" description="Helical" evidence="1">
    <location>
        <begin position="115"/>
        <end position="135"/>
    </location>
</feature>
<feature type="transmembrane region" description="Helical" evidence="1">
    <location>
        <begin position="150"/>
        <end position="170"/>
    </location>
</feature>
<feature type="transmembrane region" description="Helical" evidence="1">
    <location>
        <begin position="182"/>
        <end position="202"/>
    </location>
</feature>
<feature type="transmembrane region" description="Helical" evidence="1">
    <location>
        <begin position="220"/>
        <end position="240"/>
    </location>
</feature>
<feature type="transmembrane region" description="Helical" evidence="1">
    <location>
        <begin position="261"/>
        <end position="281"/>
    </location>
</feature>
<feature type="transmembrane region" description="Helical" evidence="1">
    <location>
        <begin position="293"/>
        <end position="313"/>
    </location>
</feature>
<feature type="transmembrane region" description="Helical" evidence="1">
    <location>
        <begin position="351"/>
        <end position="371"/>
    </location>
</feature>
<feature type="transmembrane region" description="Helical" evidence="1">
    <location>
        <begin position="383"/>
        <end position="403"/>
    </location>
</feature>
<feature type="transmembrane region" description="Helical" evidence="1">
    <location>
        <begin position="408"/>
        <end position="428"/>
    </location>
</feature>
<feature type="transmembrane region" description="Helical" evidence="1">
    <location>
        <begin position="433"/>
        <end position="453"/>
    </location>
</feature>
<reference key="1">
    <citation type="submission" date="2008-01" db="EMBL/GenBank/DDBJ databases">
        <title>Complete sequence of Pseudomonas putida GB-1.</title>
        <authorList>
            <consortium name="US DOE Joint Genome Institute"/>
            <person name="Copeland A."/>
            <person name="Lucas S."/>
            <person name="Lapidus A."/>
            <person name="Barry K."/>
            <person name="Glavina del Rio T."/>
            <person name="Dalin E."/>
            <person name="Tice H."/>
            <person name="Pitluck S."/>
            <person name="Bruce D."/>
            <person name="Goodwin L."/>
            <person name="Chertkov O."/>
            <person name="Brettin T."/>
            <person name="Detter J.C."/>
            <person name="Han C."/>
            <person name="Kuske C.R."/>
            <person name="Schmutz J."/>
            <person name="Larimer F."/>
            <person name="Land M."/>
            <person name="Hauser L."/>
            <person name="Kyrpides N."/>
            <person name="Kim E."/>
            <person name="McCarthy J.K."/>
            <person name="Richardson P."/>
        </authorList>
    </citation>
    <scope>NUCLEOTIDE SEQUENCE [LARGE SCALE GENOMIC DNA]</scope>
    <source>
        <strain>GB-1</strain>
    </source>
</reference>
<name>KUP_PSEPG</name>
<gene>
    <name evidence="1" type="primary">kup</name>
    <name type="ordered locus">PputGB1_4218</name>
</gene>
<evidence type="ECO:0000255" key="1">
    <source>
        <dbReference type="HAMAP-Rule" id="MF_01522"/>
    </source>
</evidence>